<keyword id="KW-0325">Glycoprotein</keyword>
<keyword id="KW-0333">Golgi apparatus</keyword>
<keyword id="KW-0407">Ion channel</keyword>
<keyword id="KW-0406">Ion transport</keyword>
<keyword id="KW-0472">Membrane</keyword>
<keyword id="KW-0653">Protein transport</keyword>
<keyword id="KW-1185">Reference proteome</keyword>
<keyword id="KW-0812">Transmembrane</keyword>
<keyword id="KW-1133">Transmembrane helix</keyword>
<keyword id="KW-0813">Transport</keyword>
<keyword id="KW-0851">Voltage-gated channel</keyword>
<name>GPHR_SALSA</name>
<accession>B5X1G3</accession>
<dbReference type="EMBL" id="BT044882">
    <property type="protein sequence ID" value="ACI33144.1"/>
    <property type="molecule type" value="mRNA"/>
</dbReference>
<dbReference type="RefSeq" id="NP_001133391.1">
    <property type="nucleotide sequence ID" value="NM_001139919.1"/>
</dbReference>
<dbReference type="SMR" id="B5X1G3"/>
<dbReference type="STRING" id="8030.ENSSSAP00000075982"/>
<dbReference type="GlyCosmos" id="B5X1G3">
    <property type="glycosylation" value="2 sites, No reported glycans"/>
</dbReference>
<dbReference type="PaxDb" id="8030-ENSSSAP00000075982"/>
<dbReference type="GeneID" id="100194890"/>
<dbReference type="KEGG" id="sasa:100194890"/>
<dbReference type="OrthoDB" id="270132at7898"/>
<dbReference type="Proteomes" id="UP000087266">
    <property type="component" value="Chromosome ssa25"/>
</dbReference>
<dbReference type="GO" id="GO:0032580">
    <property type="term" value="C:Golgi cisterna membrane"/>
    <property type="evidence" value="ECO:0007669"/>
    <property type="project" value="TreeGrafter"/>
</dbReference>
<dbReference type="GO" id="GO:0000139">
    <property type="term" value="C:Golgi membrane"/>
    <property type="evidence" value="ECO:0007669"/>
    <property type="project" value="UniProtKB-SubCell"/>
</dbReference>
<dbReference type="GO" id="GO:0034702">
    <property type="term" value="C:monoatomic ion channel complex"/>
    <property type="evidence" value="ECO:0007669"/>
    <property type="project" value="UniProtKB-KW"/>
</dbReference>
<dbReference type="GO" id="GO:0008308">
    <property type="term" value="F:voltage-gated monoatomic anion channel activity"/>
    <property type="evidence" value="ECO:0007669"/>
    <property type="project" value="TreeGrafter"/>
</dbReference>
<dbReference type="GO" id="GO:0051452">
    <property type="term" value="P:intracellular pH reduction"/>
    <property type="evidence" value="ECO:0007669"/>
    <property type="project" value="TreeGrafter"/>
</dbReference>
<dbReference type="GO" id="GO:0015031">
    <property type="term" value="P:protein transport"/>
    <property type="evidence" value="ECO:0007669"/>
    <property type="project" value="UniProtKB-KW"/>
</dbReference>
<dbReference type="InterPro" id="IPR025969">
    <property type="entry name" value="ABA_GPCR_dom"/>
</dbReference>
<dbReference type="InterPro" id="IPR022535">
    <property type="entry name" value="Golgi_pH-regulator_cons_dom"/>
</dbReference>
<dbReference type="InterPro" id="IPR015672">
    <property type="entry name" value="GPHR/GTG"/>
</dbReference>
<dbReference type="PANTHER" id="PTHR15948">
    <property type="entry name" value="G-PROTEIN COUPLED RECEPTOR 89-RELATED"/>
    <property type="match status" value="1"/>
</dbReference>
<dbReference type="PANTHER" id="PTHR15948:SF0">
    <property type="entry name" value="GOLGI PH REGULATOR A-RELATED"/>
    <property type="match status" value="1"/>
</dbReference>
<dbReference type="Pfam" id="PF12430">
    <property type="entry name" value="ABA_GPCR"/>
    <property type="match status" value="1"/>
</dbReference>
<dbReference type="Pfam" id="PF12537">
    <property type="entry name" value="GPHR_N"/>
    <property type="match status" value="1"/>
</dbReference>
<protein>
    <recommendedName>
        <fullName evidence="1">Golgi pH regulator</fullName>
    </recommendedName>
    <alternativeName>
        <fullName>Protein gpr89</fullName>
    </alternativeName>
</protein>
<sequence>MSFLMDSVIMFTSQVLFFGFGWLFFMRQLFKDYEVRQYVVQVVFSITFAFSCTMFELIIFEILGALETSSRYFHWKFNLYVILLVLIFVVPFYIGYFVVSNIRLLQRQKLLFACVVWFTFMYFFWKLGDPFPILSPKHGILSIEQLISRVGVIGVTLMALLSGFGAVNCPYTYMSYFLRNVTESDILALERRLLQTMDMIVSKKKRIAMTRRQMYQRGEDQNKQTGFWGMIKSVTSSPPGSENLSLIQQEVDALEELSRQLFLETVDLQATKERIEYSKTFQGKYFNFLGYFFSIYCVWKIFMATINIVFDRVGKTDPVTRGIEITVNYLGIQFDVKFWSQHISFILVGIIIVTSIRGLLITLTKFFYAISSSKSSNVIVLVLAQIMGMYFVSSVLLMRMSMPLEYRSIVTEVLGELQFNFYHRWFDVIFLVSALSSILFLYLAHKQAPEKHMTP</sequence>
<reference key="1">
    <citation type="journal article" date="2010" name="BMC Genomics">
        <title>Salmo salar and Esox lucius full-length cDNA sequences reveal changes in evolutionary pressures on a post-tetraploidization genome.</title>
        <authorList>
            <person name="Leong J.S."/>
            <person name="Jantzen S.G."/>
            <person name="von Schalburg K.R."/>
            <person name="Cooper G.A."/>
            <person name="Messmer A.M."/>
            <person name="Liao N.Y."/>
            <person name="Munro S."/>
            <person name="Moore R."/>
            <person name="Holt R.A."/>
            <person name="Jones S.J."/>
            <person name="Davidson W.S."/>
            <person name="Koop B.F."/>
        </authorList>
    </citation>
    <scope>NUCLEOTIDE SEQUENCE [LARGE SCALE MRNA]</scope>
    <source>
        <tissue>Brain</tissue>
    </source>
</reference>
<feature type="chain" id="PRO_0000395007" description="Golgi pH regulator">
    <location>
        <begin position="1"/>
        <end position="455"/>
    </location>
</feature>
<feature type="transmembrane region" description="Helical" evidence="2">
    <location>
        <begin position="46"/>
        <end position="66"/>
    </location>
</feature>
<feature type="transmembrane region" description="Helical" evidence="2">
    <location>
        <begin position="79"/>
        <end position="99"/>
    </location>
</feature>
<feature type="transmembrane region" description="Helical" evidence="2">
    <location>
        <begin position="111"/>
        <end position="131"/>
    </location>
</feature>
<feature type="transmembrane region" description="Helical" evidence="2">
    <location>
        <begin position="150"/>
        <end position="170"/>
    </location>
</feature>
<feature type="transmembrane region" description="Helical" evidence="2">
    <location>
        <begin position="290"/>
        <end position="310"/>
    </location>
</feature>
<feature type="transmembrane region" description="Helical" evidence="2">
    <location>
        <begin position="343"/>
        <end position="363"/>
    </location>
</feature>
<feature type="transmembrane region" description="Helical" evidence="2">
    <location>
        <begin position="378"/>
        <end position="398"/>
    </location>
</feature>
<feature type="transmembrane region" description="Helical" evidence="2">
    <location>
        <begin position="425"/>
        <end position="445"/>
    </location>
</feature>
<feature type="glycosylation site" description="N-linked (GlcNAc...) asparagine" evidence="2">
    <location>
        <position position="180"/>
    </location>
</feature>
<feature type="glycosylation site" description="N-linked (GlcNAc...) asparagine" evidence="2">
    <location>
        <position position="243"/>
    </location>
</feature>
<gene>
    <name evidence="1" type="primary">gpr89</name>
    <name type="synonym">gphr</name>
</gene>
<evidence type="ECO:0000250" key="1">
    <source>
        <dbReference type="UniProtKB" id="P0CG08"/>
    </source>
</evidence>
<evidence type="ECO:0000255" key="2"/>
<evidence type="ECO:0000305" key="3"/>
<organism>
    <name type="scientific">Salmo salar</name>
    <name type="common">Atlantic salmon</name>
    <dbReference type="NCBI Taxonomy" id="8030"/>
    <lineage>
        <taxon>Eukaryota</taxon>
        <taxon>Metazoa</taxon>
        <taxon>Chordata</taxon>
        <taxon>Craniata</taxon>
        <taxon>Vertebrata</taxon>
        <taxon>Euteleostomi</taxon>
        <taxon>Actinopterygii</taxon>
        <taxon>Neopterygii</taxon>
        <taxon>Teleostei</taxon>
        <taxon>Protacanthopterygii</taxon>
        <taxon>Salmoniformes</taxon>
        <taxon>Salmonidae</taxon>
        <taxon>Salmoninae</taxon>
        <taxon>Salmo</taxon>
    </lineage>
</organism>
<comment type="function">
    <text evidence="1">Voltage-gated channel that enables the transfer of anions such as iodide, chloride, bromide and fluoride which may function in counter-ion conductance and participates in Golgi acidification.</text>
</comment>
<comment type="catalytic activity">
    <reaction evidence="1">
        <text>iodide(out) = iodide(in)</text>
        <dbReference type="Rhea" id="RHEA:66324"/>
        <dbReference type="ChEBI" id="CHEBI:16382"/>
    </reaction>
</comment>
<comment type="catalytic activity">
    <reaction evidence="1">
        <text>chloride(in) = chloride(out)</text>
        <dbReference type="Rhea" id="RHEA:29823"/>
        <dbReference type="ChEBI" id="CHEBI:17996"/>
    </reaction>
</comment>
<comment type="catalytic activity">
    <reaction evidence="1">
        <text>bromide(in) = bromide(out)</text>
        <dbReference type="Rhea" id="RHEA:75383"/>
        <dbReference type="ChEBI" id="CHEBI:15858"/>
    </reaction>
</comment>
<comment type="catalytic activity">
    <reaction evidence="1">
        <text>fluoride(in) = fluoride(out)</text>
        <dbReference type="Rhea" id="RHEA:76159"/>
        <dbReference type="ChEBI" id="CHEBI:17051"/>
    </reaction>
</comment>
<comment type="subunit">
    <text evidence="1">Homotrimer.</text>
</comment>
<comment type="subcellular location">
    <subcellularLocation>
        <location evidence="1">Golgi apparatus membrane</location>
        <topology evidence="2">Multi-pass membrane protein</topology>
    </subcellularLocation>
</comment>
<comment type="similarity">
    <text evidence="3">Belongs to the Golgi pH regulator (TC 1.A.38) family.</text>
</comment>
<proteinExistence type="evidence at transcript level"/>